<protein>
    <recommendedName>
        <fullName evidence="1">Large ribosomal subunit protein bL34</fullName>
    </recommendedName>
    <alternativeName>
        <fullName evidence="3">50S ribosomal protein L34</fullName>
    </alternativeName>
</protein>
<proteinExistence type="inferred from homology"/>
<accession>C1DNG0</accession>
<keyword id="KW-0687">Ribonucleoprotein</keyword>
<keyword id="KW-0689">Ribosomal protein</keyword>
<evidence type="ECO:0000255" key="1">
    <source>
        <dbReference type="HAMAP-Rule" id="MF_00391"/>
    </source>
</evidence>
<evidence type="ECO:0000256" key="2">
    <source>
        <dbReference type="SAM" id="MobiDB-lite"/>
    </source>
</evidence>
<evidence type="ECO:0000305" key="3"/>
<name>RL34_AZOVD</name>
<gene>
    <name evidence="1" type="primary">rpmH</name>
    <name type="ordered locus">Avin_52480</name>
</gene>
<sequence length="44" mass="5211">MKRTFQPSTLKRARTHGFRARMATKNGRQVLSRRRAKGRKRLTV</sequence>
<feature type="chain" id="PRO_1000205817" description="Large ribosomal subunit protein bL34">
    <location>
        <begin position="1"/>
        <end position="44"/>
    </location>
</feature>
<feature type="region of interest" description="Disordered" evidence="2">
    <location>
        <begin position="24"/>
        <end position="44"/>
    </location>
</feature>
<feature type="compositionally biased region" description="Basic residues" evidence="2">
    <location>
        <begin position="31"/>
        <end position="44"/>
    </location>
</feature>
<comment type="similarity">
    <text evidence="1">Belongs to the bacterial ribosomal protein bL34 family.</text>
</comment>
<organism>
    <name type="scientific">Azotobacter vinelandii (strain DJ / ATCC BAA-1303)</name>
    <dbReference type="NCBI Taxonomy" id="322710"/>
    <lineage>
        <taxon>Bacteria</taxon>
        <taxon>Pseudomonadati</taxon>
        <taxon>Pseudomonadota</taxon>
        <taxon>Gammaproteobacteria</taxon>
        <taxon>Pseudomonadales</taxon>
        <taxon>Pseudomonadaceae</taxon>
        <taxon>Azotobacter</taxon>
    </lineage>
</organism>
<reference key="1">
    <citation type="journal article" date="2009" name="J. Bacteriol.">
        <title>Genome sequence of Azotobacter vinelandii, an obligate aerobe specialized to support diverse anaerobic metabolic processes.</title>
        <authorList>
            <person name="Setubal J.C."/>
            <person name="Dos Santos P."/>
            <person name="Goldman B.S."/>
            <person name="Ertesvaag H."/>
            <person name="Espin G."/>
            <person name="Rubio L.M."/>
            <person name="Valla S."/>
            <person name="Almeida N.F."/>
            <person name="Balasubramanian D."/>
            <person name="Cromes L."/>
            <person name="Curatti L."/>
            <person name="Du Z."/>
            <person name="Godsy E."/>
            <person name="Goodner B."/>
            <person name="Hellner-Burris K."/>
            <person name="Hernandez J.A."/>
            <person name="Houmiel K."/>
            <person name="Imperial J."/>
            <person name="Kennedy C."/>
            <person name="Larson T.J."/>
            <person name="Latreille P."/>
            <person name="Ligon L.S."/>
            <person name="Lu J."/>
            <person name="Maerk M."/>
            <person name="Miller N.M."/>
            <person name="Norton S."/>
            <person name="O'Carroll I.P."/>
            <person name="Paulsen I."/>
            <person name="Raulfs E.C."/>
            <person name="Roemer R."/>
            <person name="Rosser J."/>
            <person name="Segura D."/>
            <person name="Slater S."/>
            <person name="Stricklin S.L."/>
            <person name="Studholme D.J."/>
            <person name="Sun J."/>
            <person name="Viana C.J."/>
            <person name="Wallin E."/>
            <person name="Wang B."/>
            <person name="Wheeler C."/>
            <person name="Zhu H."/>
            <person name="Dean D.R."/>
            <person name="Dixon R."/>
            <person name="Wood D."/>
        </authorList>
    </citation>
    <scope>NUCLEOTIDE SEQUENCE [LARGE SCALE GENOMIC DNA]</scope>
    <source>
        <strain>DJ / ATCC BAA-1303</strain>
    </source>
</reference>
<dbReference type="EMBL" id="CP001157">
    <property type="protein sequence ID" value="ACO81318.1"/>
    <property type="molecule type" value="Genomic_DNA"/>
</dbReference>
<dbReference type="RefSeq" id="WP_003458028.1">
    <property type="nucleotide sequence ID" value="NZ_CP144736.1"/>
</dbReference>
<dbReference type="SMR" id="C1DNG0"/>
<dbReference type="STRING" id="322710.Avin_52480"/>
<dbReference type="EnsemblBacteria" id="ACO81318">
    <property type="protein sequence ID" value="ACO81318"/>
    <property type="gene ID" value="Avin_52480"/>
</dbReference>
<dbReference type="GeneID" id="88188055"/>
<dbReference type="KEGG" id="avn:Avin_52480"/>
<dbReference type="eggNOG" id="COG0230">
    <property type="taxonomic scope" value="Bacteria"/>
</dbReference>
<dbReference type="HOGENOM" id="CLU_129938_2_0_6"/>
<dbReference type="OrthoDB" id="9804164at2"/>
<dbReference type="Proteomes" id="UP000002424">
    <property type="component" value="Chromosome"/>
</dbReference>
<dbReference type="GO" id="GO:1990904">
    <property type="term" value="C:ribonucleoprotein complex"/>
    <property type="evidence" value="ECO:0007669"/>
    <property type="project" value="UniProtKB-KW"/>
</dbReference>
<dbReference type="GO" id="GO:0005840">
    <property type="term" value="C:ribosome"/>
    <property type="evidence" value="ECO:0007669"/>
    <property type="project" value="UniProtKB-KW"/>
</dbReference>
<dbReference type="GO" id="GO:0003735">
    <property type="term" value="F:structural constituent of ribosome"/>
    <property type="evidence" value="ECO:0007669"/>
    <property type="project" value="InterPro"/>
</dbReference>
<dbReference type="GO" id="GO:0006412">
    <property type="term" value="P:translation"/>
    <property type="evidence" value="ECO:0007669"/>
    <property type="project" value="UniProtKB-UniRule"/>
</dbReference>
<dbReference type="FunFam" id="1.10.287.3980:FF:000001">
    <property type="entry name" value="Mitochondrial ribosomal protein L34"/>
    <property type="match status" value="1"/>
</dbReference>
<dbReference type="Gene3D" id="1.10.287.3980">
    <property type="match status" value="1"/>
</dbReference>
<dbReference type="HAMAP" id="MF_00391">
    <property type="entry name" value="Ribosomal_bL34"/>
    <property type="match status" value="1"/>
</dbReference>
<dbReference type="InterPro" id="IPR000271">
    <property type="entry name" value="Ribosomal_bL34"/>
</dbReference>
<dbReference type="InterPro" id="IPR020939">
    <property type="entry name" value="Ribosomal_bL34_CS"/>
</dbReference>
<dbReference type="NCBIfam" id="TIGR01030">
    <property type="entry name" value="rpmH_bact"/>
    <property type="match status" value="1"/>
</dbReference>
<dbReference type="PANTHER" id="PTHR14503:SF4">
    <property type="entry name" value="LARGE RIBOSOMAL SUBUNIT PROTEIN BL34M"/>
    <property type="match status" value="1"/>
</dbReference>
<dbReference type="PANTHER" id="PTHR14503">
    <property type="entry name" value="MITOCHONDRIAL RIBOSOMAL PROTEIN 34 FAMILY MEMBER"/>
    <property type="match status" value="1"/>
</dbReference>
<dbReference type="Pfam" id="PF00468">
    <property type="entry name" value="Ribosomal_L34"/>
    <property type="match status" value="1"/>
</dbReference>
<dbReference type="PROSITE" id="PS00784">
    <property type="entry name" value="RIBOSOMAL_L34"/>
    <property type="match status" value="1"/>
</dbReference>